<name>ATPE_RUBXD</name>
<gene>
    <name evidence="1" type="primary">atpC</name>
    <name type="ordered locus">Rxyl_1637</name>
</gene>
<accession>Q1AVI0</accession>
<organism>
    <name type="scientific">Rubrobacter xylanophilus (strain DSM 9941 / JCM 11954 / NBRC 16129 / PRD-1)</name>
    <dbReference type="NCBI Taxonomy" id="266117"/>
    <lineage>
        <taxon>Bacteria</taxon>
        <taxon>Bacillati</taxon>
        <taxon>Actinomycetota</taxon>
        <taxon>Rubrobacteria</taxon>
        <taxon>Rubrobacterales</taxon>
        <taxon>Rubrobacteraceae</taxon>
        <taxon>Rubrobacter</taxon>
    </lineage>
</organism>
<dbReference type="EMBL" id="CP000386">
    <property type="protein sequence ID" value="ABG04598.1"/>
    <property type="molecule type" value="Genomic_DNA"/>
</dbReference>
<dbReference type="RefSeq" id="WP_011564615.1">
    <property type="nucleotide sequence ID" value="NC_008148.1"/>
</dbReference>
<dbReference type="SMR" id="Q1AVI0"/>
<dbReference type="STRING" id="266117.Rxyl_1637"/>
<dbReference type="KEGG" id="rxy:Rxyl_1637"/>
<dbReference type="eggNOG" id="COG0355">
    <property type="taxonomic scope" value="Bacteria"/>
</dbReference>
<dbReference type="HOGENOM" id="CLU_084338_1_3_11"/>
<dbReference type="OrthoDB" id="9791445at2"/>
<dbReference type="PhylomeDB" id="Q1AVI0"/>
<dbReference type="Proteomes" id="UP000006637">
    <property type="component" value="Chromosome"/>
</dbReference>
<dbReference type="GO" id="GO:0005886">
    <property type="term" value="C:plasma membrane"/>
    <property type="evidence" value="ECO:0007669"/>
    <property type="project" value="UniProtKB-SubCell"/>
</dbReference>
<dbReference type="GO" id="GO:0045259">
    <property type="term" value="C:proton-transporting ATP synthase complex"/>
    <property type="evidence" value="ECO:0007669"/>
    <property type="project" value="UniProtKB-KW"/>
</dbReference>
<dbReference type="GO" id="GO:0005524">
    <property type="term" value="F:ATP binding"/>
    <property type="evidence" value="ECO:0007669"/>
    <property type="project" value="UniProtKB-UniRule"/>
</dbReference>
<dbReference type="GO" id="GO:0046933">
    <property type="term" value="F:proton-transporting ATP synthase activity, rotational mechanism"/>
    <property type="evidence" value="ECO:0007669"/>
    <property type="project" value="UniProtKB-UniRule"/>
</dbReference>
<dbReference type="CDD" id="cd12152">
    <property type="entry name" value="F1-ATPase_delta"/>
    <property type="match status" value="1"/>
</dbReference>
<dbReference type="Gene3D" id="2.60.15.10">
    <property type="entry name" value="F0F1 ATP synthase delta/epsilon subunit, N-terminal"/>
    <property type="match status" value="1"/>
</dbReference>
<dbReference type="HAMAP" id="MF_00530">
    <property type="entry name" value="ATP_synth_epsil_bac"/>
    <property type="match status" value="1"/>
</dbReference>
<dbReference type="InterPro" id="IPR001469">
    <property type="entry name" value="ATP_synth_F1_dsu/esu"/>
</dbReference>
<dbReference type="InterPro" id="IPR020546">
    <property type="entry name" value="ATP_synth_F1_dsu/esu_N"/>
</dbReference>
<dbReference type="InterPro" id="IPR036771">
    <property type="entry name" value="ATPsynth_dsu/esu_N"/>
</dbReference>
<dbReference type="NCBIfam" id="TIGR01216">
    <property type="entry name" value="ATP_synt_epsi"/>
    <property type="match status" value="1"/>
</dbReference>
<dbReference type="PANTHER" id="PTHR13822">
    <property type="entry name" value="ATP SYNTHASE DELTA/EPSILON CHAIN"/>
    <property type="match status" value="1"/>
</dbReference>
<dbReference type="PANTHER" id="PTHR13822:SF10">
    <property type="entry name" value="ATP SYNTHASE EPSILON CHAIN, CHLOROPLASTIC"/>
    <property type="match status" value="1"/>
</dbReference>
<dbReference type="Pfam" id="PF02823">
    <property type="entry name" value="ATP-synt_DE_N"/>
    <property type="match status" value="1"/>
</dbReference>
<dbReference type="SUPFAM" id="SSF51344">
    <property type="entry name" value="Epsilon subunit of F1F0-ATP synthase N-terminal domain"/>
    <property type="match status" value="1"/>
</dbReference>
<feature type="chain" id="PRO_0000265883" description="ATP synthase epsilon chain">
    <location>
        <begin position="1"/>
        <end position="146"/>
    </location>
</feature>
<feature type="region of interest" description="Disordered" evidence="2">
    <location>
        <begin position="103"/>
        <end position="124"/>
    </location>
</feature>
<keyword id="KW-0066">ATP synthesis</keyword>
<keyword id="KW-1003">Cell membrane</keyword>
<keyword id="KW-0139">CF(1)</keyword>
<keyword id="KW-0375">Hydrogen ion transport</keyword>
<keyword id="KW-0406">Ion transport</keyword>
<keyword id="KW-0472">Membrane</keyword>
<keyword id="KW-1185">Reference proteome</keyword>
<keyword id="KW-0813">Transport</keyword>
<sequence>MAGEGRQLFCRLITPERVVYDGEADLVVAKIADGEIGVMVDHYPVISTVDFWDVRITRGEERRVYATSDGFFKVADNLVQILVEEAVPASEINVEEAEHRIEQAERELGQLPEEEDEDSRRAREEISRRVRLGENLVRVARRYGGG</sequence>
<comment type="function">
    <text evidence="1">Produces ATP from ADP in the presence of a proton gradient across the membrane.</text>
</comment>
<comment type="subunit">
    <text>F-type ATPases have 2 components, CF(1) - the catalytic core - and CF(0) - the membrane proton channel. CF(1) has five subunits: alpha(3), beta(3), gamma(1), delta(1), epsilon(1). CF(0) has three main subunits: a, b and c.</text>
</comment>
<comment type="subcellular location">
    <subcellularLocation>
        <location evidence="1">Cell membrane</location>
        <topology evidence="1">Peripheral membrane protein</topology>
    </subcellularLocation>
</comment>
<comment type="similarity">
    <text evidence="1">Belongs to the ATPase epsilon chain family.</text>
</comment>
<protein>
    <recommendedName>
        <fullName evidence="1">ATP synthase epsilon chain</fullName>
    </recommendedName>
    <alternativeName>
        <fullName evidence="1">ATP synthase F1 sector epsilon subunit</fullName>
    </alternativeName>
    <alternativeName>
        <fullName evidence="1">F-ATPase epsilon subunit</fullName>
    </alternativeName>
</protein>
<evidence type="ECO:0000255" key="1">
    <source>
        <dbReference type="HAMAP-Rule" id="MF_00530"/>
    </source>
</evidence>
<evidence type="ECO:0000256" key="2">
    <source>
        <dbReference type="SAM" id="MobiDB-lite"/>
    </source>
</evidence>
<reference key="1">
    <citation type="submission" date="2006-06" db="EMBL/GenBank/DDBJ databases">
        <title>Complete sequence of Rubrobacter xylanophilus DSM 9941.</title>
        <authorList>
            <consortium name="US DOE Joint Genome Institute"/>
            <person name="Copeland A."/>
            <person name="Lucas S."/>
            <person name="Lapidus A."/>
            <person name="Barry K."/>
            <person name="Detter J.C."/>
            <person name="Glavina del Rio T."/>
            <person name="Hammon N."/>
            <person name="Israni S."/>
            <person name="Dalin E."/>
            <person name="Tice H."/>
            <person name="Pitluck S."/>
            <person name="Munk A.C."/>
            <person name="Brettin T."/>
            <person name="Bruce D."/>
            <person name="Han C."/>
            <person name="Tapia R."/>
            <person name="Gilna P."/>
            <person name="Schmutz J."/>
            <person name="Larimer F."/>
            <person name="Land M."/>
            <person name="Hauser L."/>
            <person name="Kyrpides N."/>
            <person name="Lykidis A."/>
            <person name="da Costa M.S."/>
            <person name="Rainey F.A."/>
            <person name="Empadinhas N."/>
            <person name="Jolivet E."/>
            <person name="Battista J.R."/>
            <person name="Richardson P."/>
        </authorList>
    </citation>
    <scope>NUCLEOTIDE SEQUENCE [LARGE SCALE GENOMIC DNA]</scope>
    <source>
        <strain>DSM 9941 / JCM 11954 / NBRC 16129 / PRD-1</strain>
    </source>
</reference>
<proteinExistence type="inferred from homology"/>